<sequence>MDFKDYYKILGVEPTADDKAIKAAYRKLARKYHPDVSKERDAEDKFKEANEAYEVLGDAQKRAEFDEIRKYGGQHGRPFQAPPGWENRGGGGGFEGGDFSDFFSSIFGGRGGGNPFGGARQQQRSAGRRGQDVELELAVFLEETLSKESKQISFQVPQTNAMGQRTGFTTKTLNVKIPAGVTDGERIRLKGQGAPGSGGGANGDLFLTLRMAPHPLFDVEGHDLIITVPLAPWEAALGAKVAVPTLEGKINLTIRPDSQSGQRLRVPGKGLANKQGERGNLYAQLKVVMPTTSDESTRELWAKLSEKAAFNPRAQWSK</sequence>
<comment type="function">
    <text evidence="1">DNA-binding protein that preferentially recognizes a curved DNA sequence. It is probably a functional analog of DnaJ; displays overlapping activities with DnaJ, but functions under different conditions, probably acting as a molecular chaperone in an adaptive response to environmental stresses other than heat shock. Lacks autonomous chaperone activity; binds native substrates and targets them for recognition by DnaK. Its activity is inhibited by the binding of CbpM.</text>
</comment>
<comment type="subcellular location">
    <subcellularLocation>
        <location evidence="1">Cytoplasm</location>
        <location evidence="1">Nucleoid</location>
    </subcellularLocation>
</comment>
<proteinExistence type="inferred from homology"/>
<accession>B0KK26</accession>
<dbReference type="EMBL" id="CP000926">
    <property type="protein sequence ID" value="ABZ00790.1"/>
    <property type="molecule type" value="Genomic_DNA"/>
</dbReference>
<dbReference type="RefSeq" id="WP_012274421.1">
    <property type="nucleotide sequence ID" value="NC_010322.1"/>
</dbReference>
<dbReference type="SMR" id="B0KK26"/>
<dbReference type="KEGG" id="ppg:PputGB1_4905"/>
<dbReference type="eggNOG" id="COG0484">
    <property type="taxonomic scope" value="Bacteria"/>
</dbReference>
<dbReference type="HOGENOM" id="CLU_017633_0_0_6"/>
<dbReference type="Proteomes" id="UP000002157">
    <property type="component" value="Chromosome"/>
</dbReference>
<dbReference type="GO" id="GO:0005737">
    <property type="term" value="C:cytoplasm"/>
    <property type="evidence" value="ECO:0007669"/>
    <property type="project" value="UniProtKB-UniRule"/>
</dbReference>
<dbReference type="GO" id="GO:0009295">
    <property type="term" value="C:nucleoid"/>
    <property type="evidence" value="ECO:0007669"/>
    <property type="project" value="UniProtKB-SubCell"/>
</dbReference>
<dbReference type="GO" id="GO:0003681">
    <property type="term" value="F:bent DNA binding"/>
    <property type="evidence" value="ECO:0007669"/>
    <property type="project" value="UniProtKB-UniRule"/>
</dbReference>
<dbReference type="GO" id="GO:0051082">
    <property type="term" value="F:unfolded protein binding"/>
    <property type="evidence" value="ECO:0007669"/>
    <property type="project" value="InterPro"/>
</dbReference>
<dbReference type="GO" id="GO:0051085">
    <property type="term" value="P:chaperone cofactor-dependent protein refolding"/>
    <property type="evidence" value="ECO:0007669"/>
    <property type="project" value="TreeGrafter"/>
</dbReference>
<dbReference type="GO" id="GO:0042026">
    <property type="term" value="P:protein refolding"/>
    <property type="evidence" value="ECO:0007669"/>
    <property type="project" value="TreeGrafter"/>
</dbReference>
<dbReference type="CDD" id="cd06257">
    <property type="entry name" value="DnaJ"/>
    <property type="match status" value="1"/>
</dbReference>
<dbReference type="CDD" id="cd10747">
    <property type="entry name" value="DnaJ_C"/>
    <property type="match status" value="1"/>
</dbReference>
<dbReference type="FunFam" id="2.60.260.20:FF:000008">
    <property type="entry name" value="Curved DNA-binding protein"/>
    <property type="match status" value="1"/>
</dbReference>
<dbReference type="FunFam" id="2.60.260.20:FF:000013">
    <property type="entry name" value="DnaJ subfamily B member 11"/>
    <property type="match status" value="1"/>
</dbReference>
<dbReference type="Gene3D" id="1.10.287.110">
    <property type="entry name" value="DnaJ domain"/>
    <property type="match status" value="1"/>
</dbReference>
<dbReference type="Gene3D" id="1.20.5.460">
    <property type="entry name" value="Single helix bin"/>
    <property type="match status" value="1"/>
</dbReference>
<dbReference type="Gene3D" id="2.60.260.20">
    <property type="entry name" value="Urease metallochaperone UreE, N-terminal domain"/>
    <property type="match status" value="2"/>
</dbReference>
<dbReference type="HAMAP" id="MF_01154">
    <property type="entry name" value="CbpA"/>
    <property type="match status" value="1"/>
</dbReference>
<dbReference type="InterPro" id="IPR023859">
    <property type="entry name" value="DNA-bd_curved-DNA"/>
</dbReference>
<dbReference type="InterPro" id="IPR002939">
    <property type="entry name" value="DnaJ_C"/>
</dbReference>
<dbReference type="InterPro" id="IPR001623">
    <property type="entry name" value="DnaJ_domain"/>
</dbReference>
<dbReference type="InterPro" id="IPR018253">
    <property type="entry name" value="DnaJ_domain_CS"/>
</dbReference>
<dbReference type="InterPro" id="IPR008971">
    <property type="entry name" value="HSP40/DnaJ_pept-bd"/>
</dbReference>
<dbReference type="InterPro" id="IPR036869">
    <property type="entry name" value="J_dom_sf"/>
</dbReference>
<dbReference type="NCBIfam" id="NF007618">
    <property type="entry name" value="PRK10266.1"/>
    <property type="match status" value="1"/>
</dbReference>
<dbReference type="PANTHER" id="PTHR43096">
    <property type="entry name" value="DNAJ HOMOLOG 1, MITOCHONDRIAL-RELATED"/>
    <property type="match status" value="1"/>
</dbReference>
<dbReference type="PANTHER" id="PTHR43096:SF52">
    <property type="entry name" value="DNAJ HOMOLOG 1, MITOCHONDRIAL-RELATED"/>
    <property type="match status" value="1"/>
</dbReference>
<dbReference type="Pfam" id="PF00226">
    <property type="entry name" value="DnaJ"/>
    <property type="match status" value="1"/>
</dbReference>
<dbReference type="Pfam" id="PF01556">
    <property type="entry name" value="DnaJ_C"/>
    <property type="match status" value="1"/>
</dbReference>
<dbReference type="PRINTS" id="PR00625">
    <property type="entry name" value="JDOMAIN"/>
</dbReference>
<dbReference type="SMART" id="SM00271">
    <property type="entry name" value="DnaJ"/>
    <property type="match status" value="1"/>
</dbReference>
<dbReference type="SUPFAM" id="SSF46565">
    <property type="entry name" value="Chaperone J-domain"/>
    <property type="match status" value="1"/>
</dbReference>
<dbReference type="SUPFAM" id="SSF49493">
    <property type="entry name" value="HSP40/DnaJ peptide-binding domain"/>
    <property type="match status" value="2"/>
</dbReference>
<dbReference type="PROSITE" id="PS00636">
    <property type="entry name" value="DNAJ_1"/>
    <property type="match status" value="1"/>
</dbReference>
<dbReference type="PROSITE" id="PS50076">
    <property type="entry name" value="DNAJ_2"/>
    <property type="match status" value="1"/>
</dbReference>
<gene>
    <name evidence="1" type="primary">cbpA</name>
    <name type="ordered locus">PputGB1_4905</name>
</gene>
<reference key="1">
    <citation type="submission" date="2008-01" db="EMBL/GenBank/DDBJ databases">
        <title>Complete sequence of Pseudomonas putida GB-1.</title>
        <authorList>
            <consortium name="US DOE Joint Genome Institute"/>
            <person name="Copeland A."/>
            <person name="Lucas S."/>
            <person name="Lapidus A."/>
            <person name="Barry K."/>
            <person name="Glavina del Rio T."/>
            <person name="Dalin E."/>
            <person name="Tice H."/>
            <person name="Pitluck S."/>
            <person name="Bruce D."/>
            <person name="Goodwin L."/>
            <person name="Chertkov O."/>
            <person name="Brettin T."/>
            <person name="Detter J.C."/>
            <person name="Han C."/>
            <person name="Kuske C.R."/>
            <person name="Schmutz J."/>
            <person name="Larimer F."/>
            <person name="Land M."/>
            <person name="Hauser L."/>
            <person name="Kyrpides N."/>
            <person name="Kim E."/>
            <person name="McCarthy J.K."/>
            <person name="Richardson P."/>
        </authorList>
    </citation>
    <scope>NUCLEOTIDE SEQUENCE [LARGE SCALE GENOMIC DNA]</scope>
    <source>
        <strain>GB-1</strain>
    </source>
</reference>
<organism>
    <name type="scientific">Pseudomonas putida (strain GB-1)</name>
    <dbReference type="NCBI Taxonomy" id="76869"/>
    <lineage>
        <taxon>Bacteria</taxon>
        <taxon>Pseudomonadati</taxon>
        <taxon>Pseudomonadota</taxon>
        <taxon>Gammaproteobacteria</taxon>
        <taxon>Pseudomonadales</taxon>
        <taxon>Pseudomonadaceae</taxon>
        <taxon>Pseudomonas</taxon>
    </lineage>
</organism>
<keyword id="KW-0143">Chaperone</keyword>
<keyword id="KW-0963">Cytoplasm</keyword>
<keyword id="KW-0238">DNA-binding</keyword>
<feature type="chain" id="PRO_1000085340" description="Curved DNA-binding protein">
    <location>
        <begin position="1"/>
        <end position="318"/>
    </location>
</feature>
<feature type="domain" description="J" evidence="1">
    <location>
        <begin position="5"/>
        <end position="69"/>
    </location>
</feature>
<feature type="region of interest" description="Disordered" evidence="2">
    <location>
        <begin position="111"/>
        <end position="130"/>
    </location>
</feature>
<evidence type="ECO:0000255" key="1">
    <source>
        <dbReference type="HAMAP-Rule" id="MF_01154"/>
    </source>
</evidence>
<evidence type="ECO:0000256" key="2">
    <source>
        <dbReference type="SAM" id="MobiDB-lite"/>
    </source>
</evidence>
<protein>
    <recommendedName>
        <fullName evidence="1">Curved DNA-binding protein</fullName>
    </recommendedName>
</protein>
<name>CBPA_PSEPG</name>